<organism>
    <name type="scientific">Streptococcus gordonii (strain Challis / ATCC 35105 / BCRC 15272 / CH1 / DL1 / V288)</name>
    <dbReference type="NCBI Taxonomy" id="467705"/>
    <lineage>
        <taxon>Bacteria</taxon>
        <taxon>Bacillati</taxon>
        <taxon>Bacillota</taxon>
        <taxon>Bacilli</taxon>
        <taxon>Lactobacillales</taxon>
        <taxon>Streptococcaceae</taxon>
        <taxon>Streptococcus</taxon>
    </lineage>
</organism>
<proteinExistence type="inferred from homology"/>
<accession>P47848</accession>
<accession>A8AXD2</accession>
<reference key="1">
    <citation type="journal article" date="1996" name="FEMS Microbiol. Lett.">
        <title>Cloning and sequence analysis of thymidine kinase from the oral bacterium Streptococcus gordonii.</title>
        <authorList>
            <person name="McNab R."/>
        </authorList>
    </citation>
    <scope>NUCLEOTIDE SEQUENCE [GENOMIC DNA]</scope>
</reference>
<reference key="2">
    <citation type="journal article" date="2007" name="J. Bacteriol.">
        <title>Genome-wide transcriptional changes in Streptococcus gordonii in response to competence signaling peptide.</title>
        <authorList>
            <person name="Vickerman M.M."/>
            <person name="Iobst S."/>
            <person name="Jesionowski A.M."/>
            <person name="Gill S.R."/>
        </authorList>
    </citation>
    <scope>NUCLEOTIDE SEQUENCE [LARGE SCALE GENOMIC DNA]</scope>
    <source>
        <strain>Challis / ATCC 35105 / BCRC 15272 / CH1 / DL1 / V288</strain>
    </source>
</reference>
<sequence>MAQLYYKYGTMNSGKTIEILKVAHNYEEQGKGVVIMTSAVDTRDGVGYVSSRIGMKRQAMAIEDDTDILGYIKNLPEKPYCILIDEAQFLKRHHVYDLARVVDELDVPVMAFGLKNDFRNELFEGSKHLLLLADKIEEIKTICQYCSRKATMVLRTDHGKPVYDGEQIQIGGNETYIPVCRKHYFKPDINN</sequence>
<comment type="catalytic activity">
    <reaction evidence="1">
        <text>thymidine + ATP = dTMP + ADP + H(+)</text>
        <dbReference type="Rhea" id="RHEA:19129"/>
        <dbReference type="ChEBI" id="CHEBI:15378"/>
        <dbReference type="ChEBI" id="CHEBI:17748"/>
        <dbReference type="ChEBI" id="CHEBI:30616"/>
        <dbReference type="ChEBI" id="CHEBI:63528"/>
        <dbReference type="ChEBI" id="CHEBI:456216"/>
        <dbReference type="EC" id="2.7.1.21"/>
    </reaction>
</comment>
<comment type="subunit">
    <text evidence="1">Homotetramer.</text>
</comment>
<comment type="subcellular location">
    <subcellularLocation>
        <location evidence="1">Cytoplasm</location>
    </subcellularLocation>
</comment>
<comment type="similarity">
    <text evidence="1">Belongs to the thymidine kinase family.</text>
</comment>
<dbReference type="EC" id="2.7.1.21" evidence="1"/>
<dbReference type="EMBL" id="L40415">
    <property type="protein sequence ID" value="AAB02289.1"/>
    <property type="molecule type" value="Genomic_DNA"/>
</dbReference>
<dbReference type="EMBL" id="CP000725">
    <property type="protein sequence ID" value="ABV10749.1"/>
    <property type="molecule type" value="Genomic_DNA"/>
</dbReference>
<dbReference type="RefSeq" id="WP_008808654.1">
    <property type="nucleotide sequence ID" value="NC_009785.1"/>
</dbReference>
<dbReference type="SMR" id="P47848"/>
<dbReference type="STRING" id="467705.SGO_1155"/>
<dbReference type="KEGG" id="sgo:SGO_1155"/>
<dbReference type="eggNOG" id="COG1435">
    <property type="taxonomic scope" value="Bacteria"/>
</dbReference>
<dbReference type="HOGENOM" id="CLU_064400_2_2_9"/>
<dbReference type="Proteomes" id="UP000001131">
    <property type="component" value="Chromosome"/>
</dbReference>
<dbReference type="GO" id="GO:0005829">
    <property type="term" value="C:cytosol"/>
    <property type="evidence" value="ECO:0007669"/>
    <property type="project" value="TreeGrafter"/>
</dbReference>
<dbReference type="GO" id="GO:0005524">
    <property type="term" value="F:ATP binding"/>
    <property type="evidence" value="ECO:0007669"/>
    <property type="project" value="UniProtKB-UniRule"/>
</dbReference>
<dbReference type="GO" id="GO:0004797">
    <property type="term" value="F:thymidine kinase activity"/>
    <property type="evidence" value="ECO:0007669"/>
    <property type="project" value="UniProtKB-UniRule"/>
</dbReference>
<dbReference type="GO" id="GO:0008270">
    <property type="term" value="F:zinc ion binding"/>
    <property type="evidence" value="ECO:0007669"/>
    <property type="project" value="UniProtKB-UniRule"/>
</dbReference>
<dbReference type="GO" id="GO:0071897">
    <property type="term" value="P:DNA biosynthetic process"/>
    <property type="evidence" value="ECO:0007669"/>
    <property type="project" value="UniProtKB-KW"/>
</dbReference>
<dbReference type="GO" id="GO:0046104">
    <property type="term" value="P:thymidine metabolic process"/>
    <property type="evidence" value="ECO:0007669"/>
    <property type="project" value="TreeGrafter"/>
</dbReference>
<dbReference type="Gene3D" id="3.30.60.20">
    <property type="match status" value="1"/>
</dbReference>
<dbReference type="Gene3D" id="3.40.50.300">
    <property type="entry name" value="P-loop containing nucleotide triphosphate hydrolases"/>
    <property type="match status" value="1"/>
</dbReference>
<dbReference type="HAMAP" id="MF_00124">
    <property type="entry name" value="Thymidine_kinase"/>
    <property type="match status" value="1"/>
</dbReference>
<dbReference type="InterPro" id="IPR027417">
    <property type="entry name" value="P-loop_NTPase"/>
</dbReference>
<dbReference type="InterPro" id="IPR001267">
    <property type="entry name" value="Thymidine_kinase"/>
</dbReference>
<dbReference type="InterPro" id="IPR020633">
    <property type="entry name" value="Thymidine_kinase_CS"/>
</dbReference>
<dbReference type="NCBIfam" id="NF003299">
    <property type="entry name" value="PRK04296.1-4"/>
    <property type="match status" value="1"/>
</dbReference>
<dbReference type="NCBIfam" id="NF003300">
    <property type="entry name" value="PRK04296.1-5"/>
    <property type="match status" value="1"/>
</dbReference>
<dbReference type="PANTHER" id="PTHR11441">
    <property type="entry name" value="THYMIDINE KINASE"/>
    <property type="match status" value="1"/>
</dbReference>
<dbReference type="PANTHER" id="PTHR11441:SF0">
    <property type="entry name" value="THYMIDINE KINASE, CYTOSOLIC"/>
    <property type="match status" value="1"/>
</dbReference>
<dbReference type="Pfam" id="PF00265">
    <property type="entry name" value="TK"/>
    <property type="match status" value="1"/>
</dbReference>
<dbReference type="PIRSF" id="PIRSF035805">
    <property type="entry name" value="TK_cell"/>
    <property type="match status" value="1"/>
</dbReference>
<dbReference type="SUPFAM" id="SSF57716">
    <property type="entry name" value="Glucocorticoid receptor-like (DNA-binding domain)"/>
    <property type="match status" value="1"/>
</dbReference>
<dbReference type="SUPFAM" id="SSF52540">
    <property type="entry name" value="P-loop containing nucleoside triphosphate hydrolases"/>
    <property type="match status" value="1"/>
</dbReference>
<dbReference type="PROSITE" id="PS00603">
    <property type="entry name" value="TK_CELLULAR_TYPE"/>
    <property type="match status" value="1"/>
</dbReference>
<name>KITH_STRGC</name>
<protein>
    <recommendedName>
        <fullName evidence="1">Thymidine kinase</fullName>
        <ecNumber evidence="1">2.7.1.21</ecNumber>
    </recommendedName>
</protein>
<evidence type="ECO:0000255" key="1">
    <source>
        <dbReference type="HAMAP-Rule" id="MF_00124"/>
    </source>
</evidence>
<feature type="chain" id="PRO_0000175030" description="Thymidine kinase">
    <location>
        <begin position="1"/>
        <end position="191"/>
    </location>
</feature>
<feature type="active site" description="Proton acceptor" evidence="1">
    <location>
        <position position="86"/>
    </location>
</feature>
<feature type="binding site" evidence="1">
    <location>
        <begin position="9"/>
        <end position="16"/>
    </location>
    <ligand>
        <name>ATP</name>
        <dbReference type="ChEBI" id="CHEBI:30616"/>
    </ligand>
</feature>
<feature type="binding site" evidence="1">
    <location>
        <begin position="85"/>
        <end position="88"/>
    </location>
    <ligand>
        <name>ATP</name>
        <dbReference type="ChEBI" id="CHEBI:30616"/>
    </ligand>
</feature>
<feature type="binding site" evidence="1">
    <location>
        <position position="143"/>
    </location>
    <ligand>
        <name>Zn(2+)</name>
        <dbReference type="ChEBI" id="CHEBI:29105"/>
    </ligand>
</feature>
<feature type="binding site" evidence="1">
    <location>
        <position position="146"/>
    </location>
    <ligand>
        <name>Zn(2+)</name>
        <dbReference type="ChEBI" id="CHEBI:29105"/>
    </ligand>
</feature>
<feature type="binding site" evidence="1">
    <location>
        <position position="180"/>
    </location>
    <ligand>
        <name>Zn(2+)</name>
        <dbReference type="ChEBI" id="CHEBI:29105"/>
    </ligand>
</feature>
<feature type="binding site" evidence="1">
    <location>
        <position position="183"/>
    </location>
    <ligand>
        <name>Zn(2+)</name>
        <dbReference type="ChEBI" id="CHEBI:29105"/>
    </ligand>
</feature>
<gene>
    <name evidence="1" type="primary">tdk</name>
    <name type="ordered locus">SGO_1155</name>
</gene>
<keyword id="KW-0067">ATP-binding</keyword>
<keyword id="KW-0963">Cytoplasm</keyword>
<keyword id="KW-0237">DNA synthesis</keyword>
<keyword id="KW-0418">Kinase</keyword>
<keyword id="KW-0479">Metal-binding</keyword>
<keyword id="KW-0547">Nucleotide-binding</keyword>
<keyword id="KW-1185">Reference proteome</keyword>
<keyword id="KW-0808">Transferase</keyword>
<keyword id="KW-0862">Zinc</keyword>